<protein>
    <recommendedName>
        <fullName evidence="1">Polyribonucleotide nucleotidyltransferase</fullName>
        <ecNumber evidence="1">2.7.7.8</ecNumber>
    </recommendedName>
    <alternativeName>
        <fullName evidence="1">Polynucleotide phosphorylase</fullName>
        <shortName evidence="1">PNPase</shortName>
    </alternativeName>
</protein>
<sequence>MNPVIKKFQFGQSTVTLETGRIARQASGAVLVTVDDDVSVLVTVVGAKQADPGKGFFPLSVHYQEKTYAAGKIPGGFFKREGRPSEKETLTSRLIDRPIRPLFPEGFMNEVQVVCTVVSTSKKTDPDIAAMIGTSAALAISGIPFDGPIGAARVAFHESTGYLLNPTYEQLAASSLDMVVAGTEEAVLMVESEAKELTEDQMLGAVLFAHDEFQSVIKAVKELAAEAAKPTWDWDWAAAPEATELLGAIRAEFGEAISQAYTITVKADRYARLGELKDQVVAKLSGEEGQPSASDVKAAFGEIEYRTVRENIVNGKPRIDGRDTRTVRPLNIEVGVLPKTHGSALFTRGETQALVVATLGTARDAQLLDTLEGEKKDPFMLHYNFPPFSVGECGRMGGAGRREIGHGRLARRSVQAMLPAADVFPYTIRVVSEITESNGSSSMASVCGASLALMDAGVPMKAPVAGIAMGLVKEGEKFAVLTDILGDEDHLGDMDFKVAGTAKGVTALQMDIKIKGITEEIMEIALGQALEARLNILGQMNQIIGQSRTELSANAPTMIAMKIDTDKIRDVIGKGGATIRAICEETKASIDIEDDGSIKIFGETKEAAEAARQRVLGITAEAEIGKIYVGKVERIVDFGAFVNILPGKDGLVHISMLSDARVEKVTDILKEGQEVEVLVLDVDNRGRIKLSIKDVAAAKASGV</sequence>
<organism>
    <name type="scientific">Pseudomonas fluorescens (strain ATCC BAA-477 / NRRL B-23932 / Pf-5)</name>
    <dbReference type="NCBI Taxonomy" id="220664"/>
    <lineage>
        <taxon>Bacteria</taxon>
        <taxon>Pseudomonadati</taxon>
        <taxon>Pseudomonadota</taxon>
        <taxon>Gammaproteobacteria</taxon>
        <taxon>Pseudomonadales</taxon>
        <taxon>Pseudomonadaceae</taxon>
        <taxon>Pseudomonas</taxon>
    </lineage>
</organism>
<dbReference type="EC" id="2.7.7.8" evidence="1"/>
<dbReference type="EMBL" id="CP000076">
    <property type="protein sequence ID" value="AAY96246.1"/>
    <property type="molecule type" value="Genomic_DNA"/>
</dbReference>
<dbReference type="RefSeq" id="WP_011059206.1">
    <property type="nucleotide sequence ID" value="NC_004129.6"/>
</dbReference>
<dbReference type="SMR" id="Q4KIF2"/>
<dbReference type="STRING" id="220664.PFL_0848"/>
<dbReference type="KEGG" id="pfl:PFL_0848"/>
<dbReference type="PATRIC" id="fig|220664.5.peg.868"/>
<dbReference type="eggNOG" id="COG1185">
    <property type="taxonomic scope" value="Bacteria"/>
</dbReference>
<dbReference type="HOGENOM" id="CLU_004217_2_2_6"/>
<dbReference type="Proteomes" id="UP000008540">
    <property type="component" value="Chromosome"/>
</dbReference>
<dbReference type="GO" id="GO:0005829">
    <property type="term" value="C:cytosol"/>
    <property type="evidence" value="ECO:0007669"/>
    <property type="project" value="TreeGrafter"/>
</dbReference>
<dbReference type="GO" id="GO:0000175">
    <property type="term" value="F:3'-5'-RNA exonuclease activity"/>
    <property type="evidence" value="ECO:0007669"/>
    <property type="project" value="TreeGrafter"/>
</dbReference>
<dbReference type="GO" id="GO:0000287">
    <property type="term" value="F:magnesium ion binding"/>
    <property type="evidence" value="ECO:0007669"/>
    <property type="project" value="UniProtKB-UniRule"/>
</dbReference>
<dbReference type="GO" id="GO:0004654">
    <property type="term" value="F:polyribonucleotide nucleotidyltransferase activity"/>
    <property type="evidence" value="ECO:0007669"/>
    <property type="project" value="UniProtKB-UniRule"/>
</dbReference>
<dbReference type="GO" id="GO:0003723">
    <property type="term" value="F:RNA binding"/>
    <property type="evidence" value="ECO:0007669"/>
    <property type="project" value="UniProtKB-UniRule"/>
</dbReference>
<dbReference type="GO" id="GO:0006402">
    <property type="term" value="P:mRNA catabolic process"/>
    <property type="evidence" value="ECO:0007669"/>
    <property type="project" value="UniProtKB-UniRule"/>
</dbReference>
<dbReference type="GO" id="GO:0006396">
    <property type="term" value="P:RNA processing"/>
    <property type="evidence" value="ECO:0007669"/>
    <property type="project" value="InterPro"/>
</dbReference>
<dbReference type="CDD" id="cd02393">
    <property type="entry name" value="KH-I_PNPase"/>
    <property type="match status" value="1"/>
</dbReference>
<dbReference type="CDD" id="cd11363">
    <property type="entry name" value="RNase_PH_PNPase_1"/>
    <property type="match status" value="1"/>
</dbReference>
<dbReference type="CDD" id="cd11364">
    <property type="entry name" value="RNase_PH_PNPase_2"/>
    <property type="match status" value="1"/>
</dbReference>
<dbReference type="CDD" id="cd04472">
    <property type="entry name" value="S1_PNPase"/>
    <property type="match status" value="1"/>
</dbReference>
<dbReference type="FunFam" id="2.40.50.140:FF:000023">
    <property type="entry name" value="Polyribonucleotide nucleotidyltransferase"/>
    <property type="match status" value="1"/>
</dbReference>
<dbReference type="FunFam" id="3.30.1370.10:FF:000001">
    <property type="entry name" value="Polyribonucleotide nucleotidyltransferase"/>
    <property type="match status" value="1"/>
</dbReference>
<dbReference type="FunFam" id="3.30.230.70:FF:000001">
    <property type="entry name" value="Polyribonucleotide nucleotidyltransferase"/>
    <property type="match status" value="1"/>
</dbReference>
<dbReference type="FunFam" id="3.30.230.70:FF:000002">
    <property type="entry name" value="Polyribonucleotide nucleotidyltransferase"/>
    <property type="match status" value="1"/>
</dbReference>
<dbReference type="Gene3D" id="3.30.230.70">
    <property type="entry name" value="GHMP Kinase, N-terminal domain"/>
    <property type="match status" value="2"/>
</dbReference>
<dbReference type="Gene3D" id="3.30.1370.10">
    <property type="entry name" value="K Homology domain, type 1"/>
    <property type="match status" value="1"/>
</dbReference>
<dbReference type="Gene3D" id="2.40.50.140">
    <property type="entry name" value="Nucleic acid-binding proteins"/>
    <property type="match status" value="1"/>
</dbReference>
<dbReference type="HAMAP" id="MF_01595">
    <property type="entry name" value="PNPase"/>
    <property type="match status" value="1"/>
</dbReference>
<dbReference type="InterPro" id="IPR001247">
    <property type="entry name" value="ExoRNase_PH_dom1"/>
</dbReference>
<dbReference type="InterPro" id="IPR015847">
    <property type="entry name" value="ExoRNase_PH_dom2"/>
</dbReference>
<dbReference type="InterPro" id="IPR036345">
    <property type="entry name" value="ExoRNase_PH_dom2_sf"/>
</dbReference>
<dbReference type="InterPro" id="IPR004087">
    <property type="entry name" value="KH_dom"/>
</dbReference>
<dbReference type="InterPro" id="IPR004088">
    <property type="entry name" value="KH_dom_type_1"/>
</dbReference>
<dbReference type="InterPro" id="IPR036612">
    <property type="entry name" value="KH_dom_type_1_sf"/>
</dbReference>
<dbReference type="InterPro" id="IPR012340">
    <property type="entry name" value="NA-bd_OB-fold"/>
</dbReference>
<dbReference type="InterPro" id="IPR012162">
    <property type="entry name" value="PNPase"/>
</dbReference>
<dbReference type="InterPro" id="IPR027408">
    <property type="entry name" value="PNPase/RNase_PH_dom_sf"/>
</dbReference>
<dbReference type="InterPro" id="IPR015848">
    <property type="entry name" value="PNPase_PH_RNA-bd_bac/org-type"/>
</dbReference>
<dbReference type="InterPro" id="IPR020568">
    <property type="entry name" value="Ribosomal_Su5_D2-typ_SF"/>
</dbReference>
<dbReference type="InterPro" id="IPR003029">
    <property type="entry name" value="S1_domain"/>
</dbReference>
<dbReference type="NCBIfam" id="TIGR03591">
    <property type="entry name" value="polynuc_phos"/>
    <property type="match status" value="1"/>
</dbReference>
<dbReference type="NCBIfam" id="NF008805">
    <property type="entry name" value="PRK11824.1"/>
    <property type="match status" value="1"/>
</dbReference>
<dbReference type="PANTHER" id="PTHR11252">
    <property type="entry name" value="POLYRIBONUCLEOTIDE NUCLEOTIDYLTRANSFERASE"/>
    <property type="match status" value="1"/>
</dbReference>
<dbReference type="PANTHER" id="PTHR11252:SF0">
    <property type="entry name" value="POLYRIBONUCLEOTIDE NUCLEOTIDYLTRANSFERASE 1, MITOCHONDRIAL"/>
    <property type="match status" value="1"/>
</dbReference>
<dbReference type="Pfam" id="PF00013">
    <property type="entry name" value="KH_1"/>
    <property type="match status" value="1"/>
</dbReference>
<dbReference type="Pfam" id="PF03726">
    <property type="entry name" value="PNPase"/>
    <property type="match status" value="1"/>
</dbReference>
<dbReference type="Pfam" id="PF01138">
    <property type="entry name" value="RNase_PH"/>
    <property type="match status" value="2"/>
</dbReference>
<dbReference type="Pfam" id="PF03725">
    <property type="entry name" value="RNase_PH_C"/>
    <property type="match status" value="2"/>
</dbReference>
<dbReference type="Pfam" id="PF00575">
    <property type="entry name" value="S1"/>
    <property type="match status" value="1"/>
</dbReference>
<dbReference type="PIRSF" id="PIRSF005499">
    <property type="entry name" value="PNPase"/>
    <property type="match status" value="1"/>
</dbReference>
<dbReference type="SMART" id="SM00322">
    <property type="entry name" value="KH"/>
    <property type="match status" value="1"/>
</dbReference>
<dbReference type="SMART" id="SM00316">
    <property type="entry name" value="S1"/>
    <property type="match status" value="1"/>
</dbReference>
<dbReference type="SUPFAM" id="SSF54791">
    <property type="entry name" value="Eukaryotic type KH-domain (KH-domain type I)"/>
    <property type="match status" value="1"/>
</dbReference>
<dbReference type="SUPFAM" id="SSF50249">
    <property type="entry name" value="Nucleic acid-binding proteins"/>
    <property type="match status" value="1"/>
</dbReference>
<dbReference type="SUPFAM" id="SSF55666">
    <property type="entry name" value="Ribonuclease PH domain 2-like"/>
    <property type="match status" value="2"/>
</dbReference>
<dbReference type="SUPFAM" id="SSF54211">
    <property type="entry name" value="Ribosomal protein S5 domain 2-like"/>
    <property type="match status" value="2"/>
</dbReference>
<dbReference type="PROSITE" id="PS50084">
    <property type="entry name" value="KH_TYPE_1"/>
    <property type="match status" value="1"/>
</dbReference>
<dbReference type="PROSITE" id="PS50126">
    <property type="entry name" value="S1"/>
    <property type="match status" value="1"/>
</dbReference>
<proteinExistence type="inferred from homology"/>
<accession>Q4KIF2</accession>
<feature type="chain" id="PRO_0000329781" description="Polyribonucleotide nucleotidyltransferase">
    <location>
        <begin position="1"/>
        <end position="703"/>
    </location>
</feature>
<feature type="domain" description="KH" evidence="1">
    <location>
        <begin position="556"/>
        <end position="615"/>
    </location>
</feature>
<feature type="domain" description="S1 motif" evidence="1">
    <location>
        <begin position="625"/>
        <end position="693"/>
    </location>
</feature>
<feature type="binding site" evidence="1">
    <location>
        <position position="489"/>
    </location>
    <ligand>
        <name>Mg(2+)</name>
        <dbReference type="ChEBI" id="CHEBI:18420"/>
    </ligand>
</feature>
<feature type="binding site" evidence="1">
    <location>
        <position position="495"/>
    </location>
    <ligand>
        <name>Mg(2+)</name>
        <dbReference type="ChEBI" id="CHEBI:18420"/>
    </ligand>
</feature>
<comment type="function">
    <text evidence="1">Involved in mRNA degradation. Catalyzes the phosphorolysis of single-stranded polyribonucleotides processively in the 3'- to 5'-direction.</text>
</comment>
<comment type="catalytic activity">
    <reaction evidence="1">
        <text>RNA(n+1) + phosphate = RNA(n) + a ribonucleoside 5'-diphosphate</text>
        <dbReference type="Rhea" id="RHEA:22096"/>
        <dbReference type="Rhea" id="RHEA-COMP:14527"/>
        <dbReference type="Rhea" id="RHEA-COMP:17342"/>
        <dbReference type="ChEBI" id="CHEBI:43474"/>
        <dbReference type="ChEBI" id="CHEBI:57930"/>
        <dbReference type="ChEBI" id="CHEBI:140395"/>
        <dbReference type="EC" id="2.7.7.8"/>
    </reaction>
</comment>
<comment type="cofactor">
    <cofactor evidence="1">
        <name>Mg(2+)</name>
        <dbReference type="ChEBI" id="CHEBI:18420"/>
    </cofactor>
</comment>
<comment type="subunit">
    <text evidence="1">Component of the RNA degradosome, which is a multiprotein complex involved in RNA processing and mRNA degradation.</text>
</comment>
<comment type="subcellular location">
    <subcellularLocation>
        <location evidence="1">Cytoplasm</location>
    </subcellularLocation>
</comment>
<comment type="similarity">
    <text evidence="1">Belongs to the polyribonucleotide nucleotidyltransferase family.</text>
</comment>
<evidence type="ECO:0000255" key="1">
    <source>
        <dbReference type="HAMAP-Rule" id="MF_01595"/>
    </source>
</evidence>
<reference key="1">
    <citation type="journal article" date="2005" name="Nat. Biotechnol.">
        <title>Complete genome sequence of the plant commensal Pseudomonas fluorescens Pf-5.</title>
        <authorList>
            <person name="Paulsen I.T."/>
            <person name="Press C.M."/>
            <person name="Ravel J."/>
            <person name="Kobayashi D.Y."/>
            <person name="Myers G.S.A."/>
            <person name="Mavrodi D.V."/>
            <person name="DeBoy R.T."/>
            <person name="Seshadri R."/>
            <person name="Ren Q."/>
            <person name="Madupu R."/>
            <person name="Dodson R.J."/>
            <person name="Durkin A.S."/>
            <person name="Brinkac L.M."/>
            <person name="Daugherty S.C."/>
            <person name="Sullivan S.A."/>
            <person name="Rosovitz M.J."/>
            <person name="Gwinn M.L."/>
            <person name="Zhou L."/>
            <person name="Schneider D.J."/>
            <person name="Cartinhour S.W."/>
            <person name="Nelson W.C."/>
            <person name="Weidman J."/>
            <person name="Watkins K."/>
            <person name="Tran K."/>
            <person name="Khouri H."/>
            <person name="Pierson E.A."/>
            <person name="Pierson L.S. III"/>
            <person name="Thomashow L.S."/>
            <person name="Loper J.E."/>
        </authorList>
    </citation>
    <scope>NUCLEOTIDE SEQUENCE [LARGE SCALE GENOMIC DNA]</scope>
    <source>
        <strain>ATCC BAA-477 / NRRL B-23932 / Pf-5</strain>
    </source>
</reference>
<keyword id="KW-0963">Cytoplasm</keyword>
<keyword id="KW-0460">Magnesium</keyword>
<keyword id="KW-0479">Metal-binding</keyword>
<keyword id="KW-0548">Nucleotidyltransferase</keyword>
<keyword id="KW-0694">RNA-binding</keyword>
<keyword id="KW-0808">Transferase</keyword>
<gene>
    <name evidence="1" type="primary">pnp</name>
    <name type="ordered locus">PFL_0848</name>
</gene>
<name>PNP_PSEF5</name>